<feature type="chain" id="PRO_0000438546" description="SHUGOSHIN 1">
    <location>
        <begin position="1"/>
        <end position="572"/>
    </location>
</feature>
<feature type="region of interest" description="Disordered" evidence="2">
    <location>
        <begin position="185"/>
        <end position="221"/>
    </location>
</feature>
<feature type="region of interest" description="Disordered" evidence="2">
    <location>
        <begin position="244"/>
        <end position="285"/>
    </location>
</feature>
<feature type="region of interest" description="Disordered" evidence="2">
    <location>
        <begin position="333"/>
        <end position="352"/>
    </location>
</feature>
<feature type="region of interest" description="Disordered" evidence="2">
    <location>
        <begin position="484"/>
        <end position="572"/>
    </location>
</feature>
<feature type="coiled-coil region" evidence="1">
    <location>
        <begin position="59"/>
        <end position="110"/>
    </location>
</feature>
<feature type="compositionally biased region" description="Polar residues" evidence="2">
    <location>
        <begin position="192"/>
        <end position="201"/>
    </location>
</feature>
<feature type="compositionally biased region" description="Basic and acidic residues" evidence="2">
    <location>
        <begin position="244"/>
        <end position="257"/>
    </location>
</feature>
<feature type="compositionally biased region" description="Basic and acidic residues" evidence="2">
    <location>
        <begin position="336"/>
        <end position="352"/>
    </location>
</feature>
<feature type="compositionally biased region" description="Basic and acidic residues" evidence="2">
    <location>
        <begin position="523"/>
        <end position="542"/>
    </location>
</feature>
<feature type="compositionally biased region" description="Basic and acidic residues" evidence="2">
    <location>
        <begin position="552"/>
        <end position="572"/>
    </location>
</feature>
<organism evidence="12">
    <name type="scientific">Arabidopsis thaliana</name>
    <name type="common">Mouse-ear cress</name>
    <dbReference type="NCBI Taxonomy" id="3702"/>
    <lineage>
        <taxon>Eukaryota</taxon>
        <taxon>Viridiplantae</taxon>
        <taxon>Streptophyta</taxon>
        <taxon>Embryophyta</taxon>
        <taxon>Tracheophyta</taxon>
        <taxon>Spermatophyta</taxon>
        <taxon>Magnoliopsida</taxon>
        <taxon>eudicotyledons</taxon>
        <taxon>Gunneridae</taxon>
        <taxon>Pentapetalae</taxon>
        <taxon>rosids</taxon>
        <taxon>malvids</taxon>
        <taxon>Brassicales</taxon>
        <taxon>Brassicaceae</taxon>
        <taxon>Camelineae</taxon>
        <taxon>Arabidopsis</taxon>
    </lineage>
</organism>
<comment type="function">
    <text evidence="3 4 5">Protects sister chromatid centromere cohesion in meiosis I but not through the protection of the cohesin SYN1 (PubMed:23884434). Required with SGO2 for full protection of centromeric cohesion during anaphase I (PubMed:24206843). Required to prevent precocious release of pericentromeric cohesins during meiosis (PubMed:24206843). Not necessary for the maintenance of the synaptonemal complex (SC) (PubMed:23884434). Not required for monopolar spindle orientation in meiosis I (PubMed:24506176).</text>
</comment>
<comment type="miscellaneous">
    <text evidence="3 4 5">Knock-down mutants show meiotic defects, reduction in seed set and fertility, and premature separation of sister chromatids before meiosis II, but no defects in vegetative development or growth (PubMed:23884434, PubMed:24206843). The localization of SYN1 and ZYP1 are not affected (PubMed:23884434). Sgo1 and sgo2 double mutants are almost completely sterile and show a premature separation of sister chromatids at anaphase I (PubMed:24506176).</text>
</comment>
<comment type="miscellaneous">
    <text evidence="8">Shugoshin is Japanese for guardian spirit.</text>
</comment>
<comment type="similarity">
    <text evidence="7">Belongs to the shugoshin family.</text>
</comment>
<comment type="sequence caution" evidence="7">
    <conflict type="erroneous gene model prediction">
        <sequence resource="EMBL-CDS" id="AAF76346"/>
    </conflict>
</comment>
<comment type="sequence caution" evidence="7">
    <conflict type="erroneous gene model prediction">
        <sequence resource="EMBL-CDS" id="AAG51375"/>
    </conflict>
</comment>
<proteinExistence type="inferred from homology"/>
<protein>
    <recommendedName>
        <fullName evidence="6">SHUGOSHIN 1</fullName>
        <shortName evidence="6">AtSGO1</shortName>
    </recommendedName>
</protein>
<dbReference type="EMBL" id="AC011560">
    <property type="protein sequence ID" value="AAG51375.1"/>
    <property type="status" value="ALT_SEQ"/>
    <property type="molecule type" value="Genomic_DNA"/>
</dbReference>
<dbReference type="EMBL" id="AC013428">
    <property type="protein sequence ID" value="AAF76346.1"/>
    <property type="status" value="ALT_SEQ"/>
    <property type="molecule type" value="Genomic_DNA"/>
</dbReference>
<dbReference type="EMBL" id="CP002686">
    <property type="protein sequence ID" value="AEE74907.1"/>
    <property type="molecule type" value="Genomic_DNA"/>
</dbReference>
<dbReference type="RefSeq" id="NP_187655.2">
    <property type="nucleotide sequence ID" value="NM_111879.3"/>
</dbReference>
<dbReference type="SMR" id="F4J3S1"/>
<dbReference type="FunCoup" id="F4J3S1">
    <property type="interactions" value="843"/>
</dbReference>
<dbReference type="STRING" id="3702.F4J3S1"/>
<dbReference type="PaxDb" id="3702-AT3G10440.1"/>
<dbReference type="EnsemblPlants" id="AT3G10440.1">
    <property type="protein sequence ID" value="AT3G10440.1"/>
    <property type="gene ID" value="AT3G10440"/>
</dbReference>
<dbReference type="GeneID" id="820208"/>
<dbReference type="Gramene" id="AT3G10440.1">
    <property type="protein sequence ID" value="AT3G10440.1"/>
    <property type="gene ID" value="AT3G10440"/>
</dbReference>
<dbReference type="KEGG" id="ath:AT3G10440"/>
<dbReference type="Araport" id="AT3G10440"/>
<dbReference type="TAIR" id="AT3G10440">
    <property type="gene designation" value="SGO1"/>
</dbReference>
<dbReference type="eggNOG" id="ENOG502RYDC">
    <property type="taxonomic scope" value="Eukaryota"/>
</dbReference>
<dbReference type="HOGENOM" id="CLU_029160_0_0_1"/>
<dbReference type="InParanoid" id="F4J3S1"/>
<dbReference type="OrthoDB" id="770508at2759"/>
<dbReference type="PRO" id="PR:F4J3S1"/>
<dbReference type="Proteomes" id="UP000006548">
    <property type="component" value="Chromosome 3"/>
</dbReference>
<dbReference type="ExpressionAtlas" id="F4J3S1">
    <property type="expression patterns" value="baseline and differential"/>
</dbReference>
<dbReference type="GO" id="GO:0000775">
    <property type="term" value="C:chromosome, centromeric region"/>
    <property type="evidence" value="ECO:0007669"/>
    <property type="project" value="InterPro"/>
</dbReference>
<dbReference type="GO" id="GO:0005634">
    <property type="term" value="C:nucleus"/>
    <property type="evidence" value="ECO:0007669"/>
    <property type="project" value="InterPro"/>
</dbReference>
<dbReference type="GO" id="GO:0034090">
    <property type="term" value="P:maintenance of meiotic sister chromatid cohesion"/>
    <property type="evidence" value="ECO:0000316"/>
    <property type="project" value="TAIR"/>
</dbReference>
<dbReference type="GO" id="GO:0045144">
    <property type="term" value="P:meiotic sister chromatid segregation"/>
    <property type="evidence" value="ECO:0007669"/>
    <property type="project" value="InterPro"/>
</dbReference>
<dbReference type="InterPro" id="IPR044693">
    <property type="entry name" value="SGO_plant"/>
</dbReference>
<dbReference type="InterPro" id="IPR011515">
    <property type="entry name" value="Shugoshin_C"/>
</dbReference>
<dbReference type="PANTHER" id="PTHR34373:SF13">
    <property type="entry name" value="SHUGOSHIN 1"/>
    <property type="match status" value="1"/>
</dbReference>
<dbReference type="PANTHER" id="PTHR34373">
    <property type="entry name" value="SHUGOSHIN 2"/>
    <property type="match status" value="1"/>
</dbReference>
<dbReference type="Pfam" id="PF07557">
    <property type="entry name" value="Shugoshin_C"/>
    <property type="match status" value="1"/>
</dbReference>
<accession>F4J3S1</accession>
<accession>Q9SQX5</accession>
<sequence length="572" mass="63946">MVRATVLNVGDHASEGVRTNKAKGEKMVLEPPMNSAQRRKLGDITNLQNQKNLMNQGAKHQQQAILISSKENAENLQKENTKLMKVVMERDGIKSDLKKLRIEFQKVQEQNLLLAQANTRILAEFNTSKDQLKVLQHELGCKNGLVMARKMLLKEQTLPCTRHASKVKAQANACGGACKTFQPNDADHEHASGSSNANSLQRNEKANSKRRVSGRKNPANSEVLDIIGRSGETCQMEDNIDNKKLVSDSDNDAENHINDNVQSKRYCAGRQSSSSKTREASQTETLQKVVDAKEIKGDARFSLTKHSDWLKSQEPEPSESLYESRFPLRRRSARLKSQEPEPSESFHDSIETTKRRRSAIRSAMFNIQELGVIQNLNGLPDDQEIAAKARCSAREQSTGSKPEAVEPHDTKEIIGKSRISLRRQSARFNFQELGVTENLNGPHDDQTIAANARCCASEQSIGSKPEAVEPHDIEERIGKIRVSSRRQSANIETPRAIKEPANPPLHDDNVEESSQISCSVSMELKRESKKKPTGDESEEMRKTTVGRPSRQAAEKIKSYKEPSLKEKMRGGF</sequence>
<name>SGO1_ARATH</name>
<gene>
    <name evidence="6" type="primary">SGO1</name>
    <name evidence="9" type="ordered locus">At3g10440</name>
    <name evidence="11" type="ORF">F13M14.28</name>
    <name evidence="10" type="ORF">F18K10.2</name>
</gene>
<reference key="1">
    <citation type="journal article" date="2000" name="Nature">
        <title>Sequence and analysis of chromosome 3 of the plant Arabidopsis thaliana.</title>
        <authorList>
            <person name="Salanoubat M."/>
            <person name="Lemcke K."/>
            <person name="Rieger M."/>
            <person name="Ansorge W."/>
            <person name="Unseld M."/>
            <person name="Fartmann B."/>
            <person name="Valle G."/>
            <person name="Bloecker H."/>
            <person name="Perez-Alonso M."/>
            <person name="Obermaier B."/>
            <person name="Delseny M."/>
            <person name="Boutry M."/>
            <person name="Grivell L.A."/>
            <person name="Mache R."/>
            <person name="Puigdomenech P."/>
            <person name="De Simone V."/>
            <person name="Choisne N."/>
            <person name="Artiguenave F."/>
            <person name="Robert C."/>
            <person name="Brottier P."/>
            <person name="Wincker P."/>
            <person name="Cattolico L."/>
            <person name="Weissenbach J."/>
            <person name="Saurin W."/>
            <person name="Quetier F."/>
            <person name="Schaefer M."/>
            <person name="Mueller-Auer S."/>
            <person name="Gabel C."/>
            <person name="Fuchs M."/>
            <person name="Benes V."/>
            <person name="Wurmbach E."/>
            <person name="Drzonek H."/>
            <person name="Erfle H."/>
            <person name="Jordan N."/>
            <person name="Bangert S."/>
            <person name="Wiedelmann R."/>
            <person name="Kranz H."/>
            <person name="Voss H."/>
            <person name="Holland R."/>
            <person name="Brandt P."/>
            <person name="Nyakatura G."/>
            <person name="Vezzi A."/>
            <person name="D'Angelo M."/>
            <person name="Pallavicini A."/>
            <person name="Toppo S."/>
            <person name="Simionati B."/>
            <person name="Conrad A."/>
            <person name="Hornischer K."/>
            <person name="Kauer G."/>
            <person name="Loehnert T.-H."/>
            <person name="Nordsiek G."/>
            <person name="Reichelt J."/>
            <person name="Scharfe M."/>
            <person name="Schoen O."/>
            <person name="Bargues M."/>
            <person name="Terol J."/>
            <person name="Climent J."/>
            <person name="Navarro P."/>
            <person name="Collado C."/>
            <person name="Perez-Perez A."/>
            <person name="Ottenwaelder B."/>
            <person name="Duchemin D."/>
            <person name="Cooke R."/>
            <person name="Laudie M."/>
            <person name="Berger-Llauro C."/>
            <person name="Purnelle B."/>
            <person name="Masuy D."/>
            <person name="de Haan M."/>
            <person name="Maarse A.C."/>
            <person name="Alcaraz J.-P."/>
            <person name="Cottet A."/>
            <person name="Casacuberta E."/>
            <person name="Monfort A."/>
            <person name="Argiriou A."/>
            <person name="Flores M."/>
            <person name="Liguori R."/>
            <person name="Vitale D."/>
            <person name="Mannhaupt G."/>
            <person name="Haase D."/>
            <person name="Schoof H."/>
            <person name="Rudd S."/>
            <person name="Zaccaria P."/>
            <person name="Mewes H.-W."/>
            <person name="Mayer K.F.X."/>
            <person name="Kaul S."/>
            <person name="Town C.D."/>
            <person name="Koo H.L."/>
            <person name="Tallon L.J."/>
            <person name="Jenkins J."/>
            <person name="Rooney T."/>
            <person name="Rizzo M."/>
            <person name="Walts A."/>
            <person name="Utterback T."/>
            <person name="Fujii C.Y."/>
            <person name="Shea T.P."/>
            <person name="Creasy T.H."/>
            <person name="Haas B."/>
            <person name="Maiti R."/>
            <person name="Wu D."/>
            <person name="Peterson J."/>
            <person name="Van Aken S."/>
            <person name="Pai G."/>
            <person name="Militscher J."/>
            <person name="Sellers P."/>
            <person name="Gill J.E."/>
            <person name="Feldblyum T.V."/>
            <person name="Preuss D."/>
            <person name="Lin X."/>
            <person name="Nierman W.C."/>
            <person name="Salzberg S.L."/>
            <person name="White O."/>
            <person name="Venter J.C."/>
            <person name="Fraser C.M."/>
            <person name="Kaneko T."/>
            <person name="Nakamura Y."/>
            <person name="Sato S."/>
            <person name="Kato T."/>
            <person name="Asamizu E."/>
            <person name="Sasamoto S."/>
            <person name="Kimura T."/>
            <person name="Idesawa K."/>
            <person name="Kawashima K."/>
            <person name="Kishida Y."/>
            <person name="Kiyokawa C."/>
            <person name="Kohara M."/>
            <person name="Matsumoto M."/>
            <person name="Matsuno A."/>
            <person name="Muraki A."/>
            <person name="Nakayama S."/>
            <person name="Nakazaki N."/>
            <person name="Shinpo S."/>
            <person name="Takeuchi C."/>
            <person name="Wada T."/>
            <person name="Watanabe A."/>
            <person name="Yamada M."/>
            <person name="Yasuda M."/>
            <person name="Tabata S."/>
        </authorList>
    </citation>
    <scope>NUCLEOTIDE SEQUENCE [LARGE SCALE GENOMIC DNA]</scope>
    <source>
        <strain>cv. Columbia</strain>
    </source>
</reference>
<reference key="2">
    <citation type="journal article" date="2017" name="Plant J.">
        <title>Araport11: a complete reannotation of the Arabidopsis thaliana reference genome.</title>
        <authorList>
            <person name="Cheng C.Y."/>
            <person name="Krishnakumar V."/>
            <person name="Chan A.P."/>
            <person name="Thibaud-Nissen F."/>
            <person name="Schobel S."/>
            <person name="Town C.D."/>
        </authorList>
    </citation>
    <scope>GENOME REANNOTATION</scope>
    <source>
        <strain>cv. Columbia</strain>
    </source>
</reference>
<reference key="3">
    <citation type="journal article" date="2013" name="Curr. Biol.">
        <title>Centromeric cohesion is protected twice at meiosis, by SHUGOSHINs at anaphase I and by PATRONUS at interkinesis.</title>
        <authorList>
            <person name="Cromer L."/>
            <person name="Jolivet S."/>
            <person name="Horlow C."/>
            <person name="Chelysheva L."/>
            <person name="Heyman J."/>
            <person name="De Jaeger G."/>
            <person name="Koncz C."/>
            <person name="De Veylder L."/>
            <person name="Mercier R."/>
        </authorList>
    </citation>
    <scope>FUNCTION</scope>
</reference>
<reference key="4">
    <citation type="journal article" date="2013" name="Plant Reprod.">
        <title>SGO1 but not SGO2 is required for maintenance of centromere cohesion in Arabidopsis thaliana meiosis.</title>
        <authorList>
            <person name="Zamariola L."/>
            <person name="De Storme N."/>
            <person name="Tiang C.L."/>
            <person name="Armstrong S.J."/>
            <person name="Franklin F.C."/>
            <person name="Geelen D."/>
        </authorList>
    </citation>
    <scope>FUNCTION</scope>
</reference>
<reference key="5">
    <citation type="journal article" date="2014" name="Plant J.">
        <title>SHUGOSHINs and PATRONUS protect meiotic centromere cohesion in Arabidopsis thaliana.</title>
        <authorList>
            <person name="Zamariola L."/>
            <person name="De Storme N."/>
            <person name="Vannerum K."/>
            <person name="Vandepoele K."/>
            <person name="Armstrong S.J."/>
            <person name="Franklin F.C."/>
            <person name="Geelen D."/>
        </authorList>
    </citation>
    <scope>FUNCTION</scope>
</reference>
<evidence type="ECO:0000255" key="1"/>
<evidence type="ECO:0000256" key="2">
    <source>
        <dbReference type="SAM" id="MobiDB-lite"/>
    </source>
</evidence>
<evidence type="ECO:0000269" key="3">
    <source>
    </source>
</evidence>
<evidence type="ECO:0000269" key="4">
    <source>
    </source>
</evidence>
<evidence type="ECO:0000269" key="5">
    <source>
    </source>
</evidence>
<evidence type="ECO:0000303" key="6">
    <source>
    </source>
</evidence>
<evidence type="ECO:0000305" key="7"/>
<evidence type="ECO:0000305" key="8">
    <source>
    </source>
</evidence>
<evidence type="ECO:0000312" key="9">
    <source>
        <dbReference type="Araport" id="AT3G10440"/>
    </source>
</evidence>
<evidence type="ECO:0000312" key="10">
    <source>
        <dbReference type="EMBL" id="AAF76346.1"/>
    </source>
</evidence>
<evidence type="ECO:0000312" key="11">
    <source>
        <dbReference type="EMBL" id="AAG51375.1"/>
    </source>
</evidence>
<evidence type="ECO:0000312" key="12">
    <source>
        <dbReference type="Proteomes" id="UP000006548"/>
    </source>
</evidence>
<keyword id="KW-0159">Chromosome partition</keyword>
<keyword id="KW-0175">Coiled coil</keyword>
<keyword id="KW-1185">Reference proteome</keyword>